<reference key="1">
    <citation type="submission" date="2006-08" db="EMBL/GenBank/DDBJ databases">
        <authorList>
            <consortium name="NIH - Mammalian Gene Collection (MGC) project"/>
        </authorList>
    </citation>
    <scope>NUCLEOTIDE SEQUENCE [LARGE SCALE MRNA]</scope>
    <source>
        <strain>Hereford</strain>
        <tissue>Fetal cerebellum</tissue>
    </source>
</reference>
<comment type="function">
    <text evidence="1">Plays an important role in amino acid transport by acting as binding partner of amino acid transporters SLC6A18 and SLC6A19, regulating their trafficking on the cell surface and their activity (By similarity). May also play a role in trafficking of amino acid transporters SLC3A1 and SLC7A9 to the renal cortical cell membrane (By similarity). Regulator of SNARE complex function (By similarity). Stimulator of beta cell replication (By similarity).</text>
</comment>
<comment type="subunit">
    <text evidence="1 2">Monomer. Homodimer; dimerization prevents CLTRN cleavage by BACE2 (By similarity). Interacts with SLC6A18; this interaction regulates the trafficking of SLC6A18 to the cell membrane and its amino acid transporter activity. Interacts with SLC6A19; this interaction regulates the trafficking of SLC6A19 to the cell membrane and its amino acid transporter activity (By similarity). Interacts with SNAPIN (By similarity).</text>
</comment>
<comment type="subcellular location">
    <subcellularLocation>
        <location evidence="1">Cell membrane</location>
        <topology evidence="3">Single-pass type I membrane protein</topology>
    </subcellularLocation>
    <text evidence="1">Localizes to the brush border membranes of cells in the proximal tubules of kidney. Colocalized with SLC6A19 in the early proximal S1 tubule.</text>
</comment>
<comment type="domain">
    <text evidence="2">The cleavage site containing the double Phe-Phe motif acts as negative regulator of shedding by BACE2.</text>
</comment>
<comment type="PTM">
    <text evidence="2">Glycosylated. Glycosylation is required for plasma membrane localization and for its cleavage by BACE2.</text>
</comment>
<comment type="PTM">
    <text evidence="1 2">Proteolytically processed in pancreatic beta cells by BACE2 leading to the generation and extracellular release of soluble CLTRN, and a corresponding cell-associated C-terminal fragment which is later cleaved by gamma-secretase. This shedding process inactivates CLTRN (By similarity). Three cleavage sites have been identified for BACE2, two clustered sites after Phe-116 and Leu-118 and a more membrane proximal site at Phe-125; the preferred BACE2 cleavage site seems to be between Phe-125 and Leu-126, Phe-116 and Leu-118 act as alternative sites (By similarity).</text>
</comment>
<comment type="similarity">
    <text evidence="5">Belongs to the CLTRN family.</text>
</comment>
<evidence type="ECO:0000250" key="1">
    <source>
        <dbReference type="UniProtKB" id="Q9ESG4"/>
    </source>
</evidence>
<evidence type="ECO:0000250" key="2">
    <source>
        <dbReference type="UniProtKB" id="Q9HBJ8"/>
    </source>
</evidence>
<evidence type="ECO:0000255" key="3"/>
<evidence type="ECO:0000255" key="4">
    <source>
        <dbReference type="PROSITE-ProRule" id="PRU01354"/>
    </source>
</evidence>
<evidence type="ECO:0000305" key="5"/>
<proteinExistence type="evidence at transcript level"/>
<name>CLTRN_BOVIN</name>
<sequence>MLWLLFFLVTAIHADLCRPDAENAFKVRLSIRTALGDKAYAWDANEEYLFKAMVAFSMRKVPNRETTEISHVLLCNVTQRVSFWFVVTDPSRNHTLPAVEVQSAIRMNRNRINNAFFLNDQTLEFLRIPSTLAPPTDPSVPIWIIIFGVIFCIVLVATMLLIISGIRQHRRKNKGPSEMEDSEDKCENVITIENGIPCDPLDMKGGHINDAFVTEDERLTPL</sequence>
<dbReference type="EMBL" id="BC120016">
    <property type="protein sequence ID" value="AAI20017.1"/>
    <property type="molecule type" value="mRNA"/>
</dbReference>
<dbReference type="RefSeq" id="NP_001069071.1">
    <property type="nucleotide sequence ID" value="NM_001075603.1"/>
</dbReference>
<dbReference type="SMR" id="Q0VCT4"/>
<dbReference type="FunCoup" id="Q0VCT4">
    <property type="interactions" value="69"/>
</dbReference>
<dbReference type="STRING" id="9913.ENSBTAP00000055619"/>
<dbReference type="GlyCosmos" id="Q0VCT4">
    <property type="glycosylation" value="2 sites, No reported glycans"/>
</dbReference>
<dbReference type="GlyGen" id="Q0VCT4">
    <property type="glycosylation" value="2 sites"/>
</dbReference>
<dbReference type="PaxDb" id="9913-ENSBTAP00000041744"/>
<dbReference type="GeneID" id="513188"/>
<dbReference type="KEGG" id="bta:513188"/>
<dbReference type="CTD" id="57393"/>
<dbReference type="VEuPathDB" id="HostDB:ENSBTAG00000048296"/>
<dbReference type="eggNOG" id="ENOG502RWVW">
    <property type="taxonomic scope" value="Eukaryota"/>
</dbReference>
<dbReference type="HOGENOM" id="CLU_108544_1_0_1"/>
<dbReference type="InParanoid" id="Q0VCT4"/>
<dbReference type="OMA" id="AYEWNES"/>
<dbReference type="OrthoDB" id="9899436at2759"/>
<dbReference type="Proteomes" id="UP000009136">
    <property type="component" value="Chromosome X"/>
</dbReference>
<dbReference type="Bgee" id="ENSBTAG00000048296">
    <property type="expression patterns" value="Expressed in metanephros cortex and 107 other cell types or tissues"/>
</dbReference>
<dbReference type="GO" id="GO:0005886">
    <property type="term" value="C:plasma membrane"/>
    <property type="evidence" value="ECO:0000250"/>
    <property type="project" value="UniProtKB"/>
</dbReference>
<dbReference type="GO" id="GO:0051957">
    <property type="term" value="P:positive regulation of amino acid transport"/>
    <property type="evidence" value="ECO:0000318"/>
    <property type="project" value="GO_Central"/>
</dbReference>
<dbReference type="InterPro" id="IPR042944">
    <property type="entry name" value="Collectrin"/>
</dbReference>
<dbReference type="InterPro" id="IPR031588">
    <property type="entry name" value="Collectrin_dom"/>
</dbReference>
<dbReference type="PANTHER" id="PTHR46884">
    <property type="entry name" value="COLLECTRIN"/>
    <property type="match status" value="1"/>
</dbReference>
<dbReference type="PANTHER" id="PTHR46884:SF1">
    <property type="entry name" value="COLLECTRIN"/>
    <property type="match status" value="1"/>
</dbReference>
<dbReference type="Pfam" id="PF16959">
    <property type="entry name" value="Collectrin"/>
    <property type="match status" value="1"/>
</dbReference>
<dbReference type="PROSITE" id="PS52010">
    <property type="entry name" value="COLLECTRIN_LIKE"/>
    <property type="match status" value="1"/>
</dbReference>
<keyword id="KW-1003">Cell membrane</keyword>
<keyword id="KW-0325">Glycoprotein</keyword>
<keyword id="KW-0472">Membrane</keyword>
<keyword id="KW-0597">Phosphoprotein</keyword>
<keyword id="KW-1185">Reference proteome</keyword>
<keyword id="KW-0732">Signal</keyword>
<keyword id="KW-0812">Transmembrane</keyword>
<keyword id="KW-1133">Transmembrane helix</keyword>
<accession>Q0VCT4</accession>
<organism>
    <name type="scientific">Bos taurus</name>
    <name type="common">Bovine</name>
    <dbReference type="NCBI Taxonomy" id="9913"/>
    <lineage>
        <taxon>Eukaryota</taxon>
        <taxon>Metazoa</taxon>
        <taxon>Chordata</taxon>
        <taxon>Craniata</taxon>
        <taxon>Vertebrata</taxon>
        <taxon>Euteleostomi</taxon>
        <taxon>Mammalia</taxon>
        <taxon>Eutheria</taxon>
        <taxon>Laurasiatheria</taxon>
        <taxon>Artiodactyla</taxon>
        <taxon>Ruminantia</taxon>
        <taxon>Pecora</taxon>
        <taxon>Bovidae</taxon>
        <taxon>Bovinae</taxon>
        <taxon>Bos</taxon>
    </lineage>
</organism>
<feature type="signal peptide" evidence="3">
    <location>
        <begin position="1"/>
        <end position="14"/>
    </location>
</feature>
<feature type="chain" id="PRO_0000363766" description="Collectrin">
    <location>
        <begin position="15"/>
        <end position="222"/>
    </location>
</feature>
<feature type="topological domain" description="Extracellular" evidence="2">
    <location>
        <begin position="15"/>
        <end position="141"/>
    </location>
</feature>
<feature type="transmembrane region" description="Helical" evidence="4">
    <location>
        <begin position="142"/>
        <end position="162"/>
    </location>
</feature>
<feature type="topological domain" description="Cytoplasmic" evidence="2">
    <location>
        <begin position="163"/>
        <end position="222"/>
    </location>
</feature>
<feature type="domain" description="Collectrin-like" evidence="4">
    <location>
        <begin position="21"/>
        <end position="222"/>
    </location>
</feature>
<feature type="site" description="Cleavage by BACE2" evidence="2">
    <location>
        <begin position="125"/>
        <end position="126"/>
    </location>
</feature>
<feature type="modified residue" description="Phosphothreonine" evidence="1">
    <location>
        <position position="214"/>
    </location>
</feature>
<feature type="modified residue" description="Phosphothreonine" evidence="1">
    <location>
        <position position="220"/>
    </location>
</feature>
<feature type="glycosylation site" description="N-linked (GlcNAc...) asparagine" evidence="3">
    <location>
        <position position="76"/>
    </location>
</feature>
<feature type="glycosylation site" description="N-linked (GlcNAc...) asparagine" evidence="3">
    <location>
        <position position="93"/>
    </location>
</feature>
<protein>
    <recommendedName>
        <fullName>Collectrin</fullName>
    </recommendedName>
    <alternativeName>
        <fullName>Transmembrane protein 27</fullName>
    </alternativeName>
</protein>
<gene>
    <name type="primary">CLTRN</name>
    <name type="synonym">TMEM27</name>
</gene>